<organism>
    <name type="scientific">Treponema pallidum subsp. pallidum (strain SS14)</name>
    <dbReference type="NCBI Taxonomy" id="455434"/>
    <lineage>
        <taxon>Bacteria</taxon>
        <taxon>Pseudomonadati</taxon>
        <taxon>Spirochaetota</taxon>
        <taxon>Spirochaetia</taxon>
        <taxon>Spirochaetales</taxon>
        <taxon>Treponemataceae</taxon>
        <taxon>Treponema</taxon>
    </lineage>
</organism>
<accession>B2S4C2</accession>
<keyword id="KW-0378">Hydrolase</keyword>
<keyword id="KW-0460">Magnesium</keyword>
<keyword id="KW-0479">Metal-binding</keyword>
<keyword id="KW-0546">Nucleotide metabolism</keyword>
<comment type="function">
    <text evidence="1">This enzyme is involved in nucleotide metabolism: it produces dUMP, the immediate precursor of thymidine nucleotides and it decreases the intracellular concentration of dUTP so that uracil cannot be incorporated into DNA.</text>
</comment>
<comment type="catalytic activity">
    <reaction evidence="1">
        <text>dUTP + H2O = dUMP + diphosphate + H(+)</text>
        <dbReference type="Rhea" id="RHEA:10248"/>
        <dbReference type="ChEBI" id="CHEBI:15377"/>
        <dbReference type="ChEBI" id="CHEBI:15378"/>
        <dbReference type="ChEBI" id="CHEBI:33019"/>
        <dbReference type="ChEBI" id="CHEBI:61555"/>
        <dbReference type="ChEBI" id="CHEBI:246422"/>
        <dbReference type="EC" id="3.6.1.23"/>
    </reaction>
</comment>
<comment type="cofactor">
    <cofactor evidence="1">
        <name>Mg(2+)</name>
        <dbReference type="ChEBI" id="CHEBI:18420"/>
    </cofactor>
</comment>
<comment type="pathway">
    <text evidence="1">Pyrimidine metabolism; dUMP biosynthesis; dUMP from dCTP (dUTP route): step 2/2.</text>
</comment>
<comment type="similarity">
    <text evidence="1">Belongs to the dUTPase family.</text>
</comment>
<gene>
    <name evidence="1" type="primary">dut</name>
    <name type="ordered locus">TPASS_0885</name>
</gene>
<protein>
    <recommendedName>
        <fullName evidence="1">Deoxyuridine 5'-triphosphate nucleotidohydrolase</fullName>
        <shortName evidence="1">dUTPase</shortName>
        <ecNumber evidence="1">3.6.1.23</ecNumber>
    </recommendedName>
    <alternativeName>
        <fullName evidence="1">dUTP pyrophosphatase</fullName>
    </alternativeName>
</protein>
<name>DUT_TREPS</name>
<evidence type="ECO:0000255" key="1">
    <source>
        <dbReference type="HAMAP-Rule" id="MF_00116"/>
    </source>
</evidence>
<dbReference type="EC" id="3.6.1.23" evidence="1"/>
<dbReference type="EMBL" id="CP000805">
    <property type="protein sequence ID" value="ACD71301.1"/>
    <property type="molecule type" value="Genomic_DNA"/>
</dbReference>
<dbReference type="RefSeq" id="WP_010882328.1">
    <property type="nucleotide sequence ID" value="NC_021508.1"/>
</dbReference>
<dbReference type="SMR" id="B2S4C2"/>
<dbReference type="GeneID" id="93876639"/>
<dbReference type="KEGG" id="tpp:TPASS_0885"/>
<dbReference type="PATRIC" id="fig|455434.6.peg.872"/>
<dbReference type="UniPathway" id="UPA00610">
    <property type="reaction ID" value="UER00666"/>
</dbReference>
<dbReference type="Proteomes" id="UP000001202">
    <property type="component" value="Chromosome"/>
</dbReference>
<dbReference type="GO" id="GO:0004170">
    <property type="term" value="F:dUTP diphosphatase activity"/>
    <property type="evidence" value="ECO:0007669"/>
    <property type="project" value="UniProtKB-UniRule"/>
</dbReference>
<dbReference type="GO" id="GO:0000287">
    <property type="term" value="F:magnesium ion binding"/>
    <property type="evidence" value="ECO:0007669"/>
    <property type="project" value="UniProtKB-UniRule"/>
</dbReference>
<dbReference type="GO" id="GO:0006226">
    <property type="term" value="P:dUMP biosynthetic process"/>
    <property type="evidence" value="ECO:0007669"/>
    <property type="project" value="UniProtKB-UniRule"/>
</dbReference>
<dbReference type="GO" id="GO:0046081">
    <property type="term" value="P:dUTP catabolic process"/>
    <property type="evidence" value="ECO:0007669"/>
    <property type="project" value="InterPro"/>
</dbReference>
<dbReference type="CDD" id="cd07557">
    <property type="entry name" value="trimeric_dUTPase"/>
    <property type="match status" value="1"/>
</dbReference>
<dbReference type="Gene3D" id="2.70.40.10">
    <property type="match status" value="1"/>
</dbReference>
<dbReference type="HAMAP" id="MF_00116">
    <property type="entry name" value="dUTPase_bact"/>
    <property type="match status" value="1"/>
</dbReference>
<dbReference type="InterPro" id="IPR008181">
    <property type="entry name" value="dUTPase"/>
</dbReference>
<dbReference type="InterPro" id="IPR029054">
    <property type="entry name" value="dUTPase-like"/>
</dbReference>
<dbReference type="InterPro" id="IPR036157">
    <property type="entry name" value="dUTPase-like_sf"/>
</dbReference>
<dbReference type="InterPro" id="IPR033704">
    <property type="entry name" value="dUTPase_trimeric"/>
</dbReference>
<dbReference type="NCBIfam" id="TIGR00576">
    <property type="entry name" value="dut"/>
    <property type="match status" value="1"/>
</dbReference>
<dbReference type="NCBIfam" id="NF001862">
    <property type="entry name" value="PRK00601.1"/>
    <property type="match status" value="1"/>
</dbReference>
<dbReference type="PANTHER" id="PTHR11241">
    <property type="entry name" value="DEOXYURIDINE 5'-TRIPHOSPHATE NUCLEOTIDOHYDROLASE"/>
    <property type="match status" value="1"/>
</dbReference>
<dbReference type="PANTHER" id="PTHR11241:SF0">
    <property type="entry name" value="DEOXYURIDINE 5'-TRIPHOSPHATE NUCLEOTIDOHYDROLASE"/>
    <property type="match status" value="1"/>
</dbReference>
<dbReference type="Pfam" id="PF00692">
    <property type="entry name" value="dUTPase"/>
    <property type="match status" value="1"/>
</dbReference>
<dbReference type="SUPFAM" id="SSF51283">
    <property type="entry name" value="dUTPase-like"/>
    <property type="match status" value="1"/>
</dbReference>
<proteinExistence type="inferred from homology"/>
<feature type="chain" id="PRO_1000095000" description="Deoxyuridine 5'-triphosphate nucleotidohydrolase">
    <location>
        <begin position="1"/>
        <end position="146"/>
    </location>
</feature>
<feature type="binding site" evidence="1">
    <location>
        <begin position="65"/>
        <end position="67"/>
    </location>
    <ligand>
        <name>substrate</name>
    </ligand>
</feature>
<feature type="binding site" evidence="1">
    <location>
        <position position="78"/>
    </location>
    <ligand>
        <name>substrate</name>
    </ligand>
</feature>
<feature type="binding site" evidence="1">
    <location>
        <begin position="82"/>
        <end position="84"/>
    </location>
    <ligand>
        <name>substrate</name>
    </ligand>
</feature>
<reference key="1">
    <citation type="journal article" date="2008" name="BMC Microbiol.">
        <title>Complete genome sequence of Treponema pallidum ssp. pallidum strain SS14 determined with oligonucleotide arrays.</title>
        <authorList>
            <person name="Matejkova P."/>
            <person name="Strouhal M."/>
            <person name="Smajs D."/>
            <person name="Norris S.J."/>
            <person name="Palzkill T."/>
            <person name="Petrosino J.F."/>
            <person name="Sodergren E."/>
            <person name="Norton J.E."/>
            <person name="Singh J."/>
            <person name="Richmond T.A."/>
            <person name="Molla M.N."/>
            <person name="Albert T.J."/>
            <person name="Weinstock G.M."/>
        </authorList>
    </citation>
    <scope>NUCLEOTIDE SEQUENCE [LARGE SCALE GENOMIC DNA]</scope>
    <source>
        <strain>SS14</strain>
    </source>
</reference>
<sequence length="146" mass="15376">MIRVRAVVYPGASFPEYQTLGSSGADLRAFLPGGPLEVHPLGRVLVPTGVCVELPVGLEMQIRPRSGLALEYGVTVLNSPGTIDADYRGEIRVLLVNLGLAAFVVSHGDRIAQAVISSVLRVEYVRSGSISLTERGKGGYGSTGVL</sequence>